<reference key="1">
    <citation type="journal article" date="2000" name="Nature">
        <title>The genome sequence of the thermoacidophilic scavenger Thermoplasma acidophilum.</title>
        <authorList>
            <person name="Ruepp A."/>
            <person name="Graml W."/>
            <person name="Santos-Martinez M.-L."/>
            <person name="Koretke K.K."/>
            <person name="Volker C."/>
            <person name="Mewes H.-W."/>
            <person name="Frishman D."/>
            <person name="Stocker S."/>
            <person name="Lupas A.N."/>
            <person name="Baumeister W."/>
        </authorList>
    </citation>
    <scope>NUCLEOTIDE SEQUENCE [LARGE SCALE GENOMIC DNA]</scope>
    <source>
        <strain>ATCC 25905 / DSM 1728 / JCM 9062 / NBRC 15155 / AMRC-C165</strain>
    </source>
</reference>
<feature type="chain" id="PRO_0000147695" description="tRNA (guanine(26)-N(2))-dimethyltransferase">
    <location>
        <begin position="1"/>
        <end position="344"/>
    </location>
</feature>
<feature type="domain" description="Trm1 methyltransferase" evidence="1">
    <location>
        <begin position="1"/>
        <end position="334"/>
    </location>
</feature>
<feature type="binding site" evidence="1">
    <location>
        <position position="35"/>
    </location>
    <ligand>
        <name>S-adenosyl-L-methionine</name>
        <dbReference type="ChEBI" id="CHEBI:59789"/>
    </ligand>
</feature>
<feature type="binding site" evidence="1">
    <location>
        <position position="60"/>
    </location>
    <ligand>
        <name>S-adenosyl-L-methionine</name>
        <dbReference type="ChEBI" id="CHEBI:59789"/>
    </ligand>
</feature>
<feature type="binding site" evidence="1">
    <location>
        <position position="76"/>
    </location>
    <ligand>
        <name>S-adenosyl-L-methionine</name>
        <dbReference type="ChEBI" id="CHEBI:59789"/>
    </ligand>
</feature>
<organism>
    <name type="scientific">Thermoplasma acidophilum (strain ATCC 25905 / DSM 1728 / JCM 9062 / NBRC 15155 / AMRC-C165)</name>
    <dbReference type="NCBI Taxonomy" id="273075"/>
    <lineage>
        <taxon>Archaea</taxon>
        <taxon>Methanobacteriati</taxon>
        <taxon>Thermoplasmatota</taxon>
        <taxon>Thermoplasmata</taxon>
        <taxon>Thermoplasmatales</taxon>
        <taxon>Thermoplasmataceae</taxon>
        <taxon>Thermoplasma</taxon>
    </lineage>
</organism>
<protein>
    <recommendedName>
        <fullName evidence="1">tRNA (guanine(26)-N(2))-dimethyltransferase</fullName>
        <ecNumber evidence="1">2.1.1.216</ecNumber>
    </recommendedName>
    <alternativeName>
        <fullName evidence="1">tRNA 2,2-dimethylguanosine-26 methyltransferase</fullName>
    </alternativeName>
    <alternativeName>
        <fullName evidence="1">tRNA(guanine-26,N(2)-N(2)) methyltransferase</fullName>
    </alternativeName>
    <alternativeName>
        <fullName evidence="1">tRNA(m(2,2)G26)dimethyltransferase</fullName>
    </alternativeName>
</protein>
<sequence>MIVREGSAEILVPEVYHGPGKRGTGFYNADQKINRDITIEFIKKMGIRNVLDGFGGTGIRGIRISKETDSAVTISEVSPDSYRLIRDNVERNGSQASVINDSFECVLQHGAYEYVDVDPYGSPVPYLDAALMGVKRNGFLGVTATDQSALTGSVPHKTRIRYDALIKNDTFRHEMGIRLLIGYMAKRAASLGRFIDPLISIWHGHYYRVFVRVRKGFEGAGRMMQNLGYVNKHNLLSGIYQDMDEGPVWKGNLQDNAVAEAVLASAGHKAFNPEENRLLFCDLTDIARARHTSLPDIESVIDALSSSGHAASRTMFSPTGIKTDASCDLVESLMMDTLHRRSPA</sequence>
<name>TRM1_THEAC</name>
<gene>
    <name evidence="1" type="primary">trm1</name>
    <name type="ordered locus">Ta0997</name>
</gene>
<keyword id="KW-0489">Methyltransferase</keyword>
<keyword id="KW-1185">Reference proteome</keyword>
<keyword id="KW-0694">RNA-binding</keyword>
<keyword id="KW-0949">S-adenosyl-L-methionine</keyword>
<keyword id="KW-0808">Transferase</keyword>
<keyword id="KW-0819">tRNA processing</keyword>
<keyword id="KW-0820">tRNA-binding</keyword>
<accession>P57706</accession>
<accession>Q9HJH1</accession>
<proteinExistence type="inferred from homology"/>
<dbReference type="EC" id="2.1.1.216" evidence="1"/>
<dbReference type="EMBL" id="AL445066">
    <property type="protein sequence ID" value="CAC12126.1"/>
    <property type="molecule type" value="Genomic_DNA"/>
</dbReference>
<dbReference type="RefSeq" id="WP_010901408.1">
    <property type="nucleotide sequence ID" value="NC_002578.1"/>
</dbReference>
<dbReference type="SMR" id="P57706"/>
<dbReference type="FunCoup" id="P57706">
    <property type="interactions" value="201"/>
</dbReference>
<dbReference type="STRING" id="273075.gene:9572216"/>
<dbReference type="PaxDb" id="273075-Ta0997"/>
<dbReference type="EnsemblBacteria" id="CAC12126">
    <property type="protein sequence ID" value="CAC12126"/>
    <property type="gene ID" value="CAC12126"/>
</dbReference>
<dbReference type="KEGG" id="tac:Ta0997"/>
<dbReference type="eggNOG" id="arCOG01219">
    <property type="taxonomic scope" value="Archaea"/>
</dbReference>
<dbReference type="HOGENOM" id="CLU_010862_5_1_2"/>
<dbReference type="InParanoid" id="P57706"/>
<dbReference type="OrthoDB" id="372177at2157"/>
<dbReference type="BRENDA" id="2.1.1.216">
    <property type="organism ID" value="6324"/>
</dbReference>
<dbReference type="Proteomes" id="UP000001024">
    <property type="component" value="Chromosome"/>
</dbReference>
<dbReference type="GO" id="GO:0160104">
    <property type="term" value="F:tRNA (guanine(26)-N2)-dimethyltransferase activity"/>
    <property type="evidence" value="ECO:0007669"/>
    <property type="project" value="UniProtKB-UniRule"/>
</dbReference>
<dbReference type="GO" id="GO:0000049">
    <property type="term" value="F:tRNA binding"/>
    <property type="evidence" value="ECO:0007669"/>
    <property type="project" value="UniProtKB-KW"/>
</dbReference>
<dbReference type="GO" id="GO:0002940">
    <property type="term" value="P:tRNA N2-guanine methylation"/>
    <property type="evidence" value="ECO:0007669"/>
    <property type="project" value="TreeGrafter"/>
</dbReference>
<dbReference type="Gene3D" id="3.30.56.70">
    <property type="entry name" value="N2,N2-dimethylguanosine tRNA methyltransferase, C-terminal domain"/>
    <property type="match status" value="1"/>
</dbReference>
<dbReference type="Gene3D" id="3.40.50.150">
    <property type="entry name" value="Vaccinia Virus protein VP39"/>
    <property type="match status" value="1"/>
</dbReference>
<dbReference type="HAMAP" id="MF_00290">
    <property type="entry name" value="tRNA_dimethyltr_TRM1"/>
    <property type="match status" value="1"/>
</dbReference>
<dbReference type="InterPro" id="IPR029063">
    <property type="entry name" value="SAM-dependent_MTases_sf"/>
</dbReference>
<dbReference type="InterPro" id="IPR002905">
    <property type="entry name" value="Trm1"/>
</dbReference>
<dbReference type="InterPro" id="IPR022923">
    <property type="entry name" value="TRM1_arc_bac"/>
</dbReference>
<dbReference type="InterPro" id="IPR042296">
    <property type="entry name" value="tRNA_met_Trm1_C"/>
</dbReference>
<dbReference type="PANTHER" id="PTHR10631">
    <property type="entry name" value="N 2 ,N 2 -DIMETHYLGUANOSINE TRNA METHYLTRANSFERASE"/>
    <property type="match status" value="1"/>
</dbReference>
<dbReference type="PANTHER" id="PTHR10631:SF3">
    <property type="entry name" value="TRNA (GUANINE(26)-N(2))-DIMETHYLTRANSFERASE"/>
    <property type="match status" value="1"/>
</dbReference>
<dbReference type="Pfam" id="PF02005">
    <property type="entry name" value="TRM"/>
    <property type="match status" value="1"/>
</dbReference>
<dbReference type="SUPFAM" id="SSF53335">
    <property type="entry name" value="S-adenosyl-L-methionine-dependent methyltransferases"/>
    <property type="match status" value="1"/>
</dbReference>
<dbReference type="PROSITE" id="PS51626">
    <property type="entry name" value="SAM_MT_TRM1"/>
    <property type="match status" value="1"/>
</dbReference>
<comment type="function">
    <text evidence="1">Dimethylates a single guanine residue at position 26 of a number of tRNAs using S-adenosyl-L-methionine as donor of the methyl groups.</text>
</comment>
<comment type="catalytic activity">
    <reaction evidence="1">
        <text>guanosine(26) in tRNA + 2 S-adenosyl-L-methionine = N(2)-dimethylguanosine(26) in tRNA + 2 S-adenosyl-L-homocysteine + 2 H(+)</text>
        <dbReference type="Rhea" id="RHEA:43140"/>
        <dbReference type="Rhea" id="RHEA-COMP:10359"/>
        <dbReference type="Rhea" id="RHEA-COMP:10360"/>
        <dbReference type="ChEBI" id="CHEBI:15378"/>
        <dbReference type="ChEBI" id="CHEBI:57856"/>
        <dbReference type="ChEBI" id="CHEBI:59789"/>
        <dbReference type="ChEBI" id="CHEBI:74269"/>
        <dbReference type="ChEBI" id="CHEBI:74513"/>
        <dbReference type="EC" id="2.1.1.216"/>
    </reaction>
</comment>
<comment type="similarity">
    <text evidence="1">Belongs to the class I-like SAM-binding methyltransferase superfamily. Trm1 family.</text>
</comment>
<evidence type="ECO:0000255" key="1">
    <source>
        <dbReference type="HAMAP-Rule" id="MF_00290"/>
    </source>
</evidence>